<name>TMPS7_MOUSE</name>
<keyword id="KW-1003">Cell membrane</keyword>
<keyword id="KW-1015">Disulfide bond</keyword>
<keyword id="KW-0325">Glycoprotein</keyword>
<keyword id="KW-0378">Hydrolase</keyword>
<keyword id="KW-0472">Membrane</keyword>
<keyword id="KW-0645">Protease</keyword>
<keyword id="KW-1185">Reference proteome</keyword>
<keyword id="KW-0677">Repeat</keyword>
<keyword id="KW-0720">Serine protease</keyword>
<keyword id="KW-0735">Signal-anchor</keyword>
<keyword id="KW-0812">Transmembrane</keyword>
<keyword id="KW-1133">Transmembrane helix</keyword>
<keyword id="KW-0865">Zymogen</keyword>
<organism>
    <name type="scientific">Mus musculus</name>
    <name type="common">Mouse</name>
    <dbReference type="NCBI Taxonomy" id="10090"/>
    <lineage>
        <taxon>Eukaryota</taxon>
        <taxon>Metazoa</taxon>
        <taxon>Chordata</taxon>
        <taxon>Craniata</taxon>
        <taxon>Vertebrata</taxon>
        <taxon>Euteleostomi</taxon>
        <taxon>Mammalia</taxon>
        <taxon>Eutheria</taxon>
        <taxon>Euarchontoglires</taxon>
        <taxon>Glires</taxon>
        <taxon>Rodentia</taxon>
        <taxon>Myomorpha</taxon>
        <taxon>Muroidea</taxon>
        <taxon>Muridae</taxon>
        <taxon>Murinae</taxon>
        <taxon>Mus</taxon>
        <taxon>Mus</taxon>
    </lineage>
</organism>
<dbReference type="EC" id="3.4.21.-"/>
<dbReference type="EMBL" id="DQ061860">
    <property type="protein sequence ID" value="AAY66996.1"/>
    <property type="molecule type" value="mRNA"/>
</dbReference>
<dbReference type="EMBL" id="AC166572">
    <property type="status" value="NOT_ANNOTATED_CDS"/>
    <property type="molecule type" value="Genomic_DNA"/>
</dbReference>
<dbReference type="EMBL" id="AK045663">
    <property type="protein sequence ID" value="BAC32448.1"/>
    <property type="status" value="ALT_SEQ"/>
    <property type="molecule type" value="mRNA"/>
</dbReference>
<dbReference type="CCDS" id="CCDS37347.2"/>
<dbReference type="RefSeq" id="NP_766043.3">
    <property type="nucleotide sequence ID" value="NM_172455.3"/>
</dbReference>
<dbReference type="RefSeq" id="XP_006521977.1">
    <property type="nucleotide sequence ID" value="XM_006521914.4"/>
</dbReference>
<dbReference type="RefSeq" id="XP_006521978.1">
    <property type="nucleotide sequence ID" value="XM_006521915.4"/>
</dbReference>
<dbReference type="SMR" id="Q8BIK6"/>
<dbReference type="BioGRID" id="228959">
    <property type="interactions" value="5"/>
</dbReference>
<dbReference type="FunCoup" id="Q8BIK6">
    <property type="interactions" value="693"/>
</dbReference>
<dbReference type="STRING" id="10090.ENSMUSP00000110209"/>
<dbReference type="MEROPS" id="S01.072"/>
<dbReference type="GlyCosmos" id="Q8BIK6">
    <property type="glycosylation" value="2 sites, No reported glycans"/>
</dbReference>
<dbReference type="GlyGen" id="Q8BIK6">
    <property type="glycosylation" value="2 sites"/>
</dbReference>
<dbReference type="PhosphoSitePlus" id="Q8BIK6"/>
<dbReference type="PaxDb" id="10090-ENSMUSP00000110209"/>
<dbReference type="Antibodypedia" id="52124">
    <property type="antibodies" value="110 antibodies from 17 providers"/>
</dbReference>
<dbReference type="DNASU" id="208171"/>
<dbReference type="Ensembl" id="ENSMUST00000114562.3">
    <property type="protein sequence ID" value="ENSMUSP00000110209.3"/>
    <property type="gene ID" value="ENSMUSG00000033177.14"/>
</dbReference>
<dbReference type="GeneID" id="208171"/>
<dbReference type="KEGG" id="mmu:208171"/>
<dbReference type="UCSC" id="uc007ziu.1">
    <property type="organism name" value="mouse"/>
</dbReference>
<dbReference type="AGR" id="MGI:2686594"/>
<dbReference type="CTD" id="344805"/>
<dbReference type="MGI" id="MGI:2686594">
    <property type="gene designation" value="Tmprss7"/>
</dbReference>
<dbReference type="VEuPathDB" id="HostDB:ENSMUSG00000033177"/>
<dbReference type="eggNOG" id="KOG3627">
    <property type="taxonomic scope" value="Eukaryota"/>
</dbReference>
<dbReference type="GeneTree" id="ENSGT00940000160085"/>
<dbReference type="HOGENOM" id="CLU_006842_19_3_1"/>
<dbReference type="InParanoid" id="Q8BIK6"/>
<dbReference type="OMA" id="WVFIFRR"/>
<dbReference type="OrthoDB" id="414661at2759"/>
<dbReference type="PhylomeDB" id="Q8BIK6"/>
<dbReference type="TreeFam" id="TF330647"/>
<dbReference type="BioGRID-ORCS" id="208171">
    <property type="hits" value="1 hit in 77 CRISPR screens"/>
</dbReference>
<dbReference type="PRO" id="PR:Q8BIK6"/>
<dbReference type="Proteomes" id="UP000000589">
    <property type="component" value="Chromosome 16"/>
</dbReference>
<dbReference type="RNAct" id="Q8BIK6">
    <property type="molecule type" value="protein"/>
</dbReference>
<dbReference type="Bgee" id="ENSMUSG00000033177">
    <property type="expression patterns" value="Expressed in mesodermal cell in embryo and 30 other cell types or tissues"/>
</dbReference>
<dbReference type="GO" id="GO:0005886">
    <property type="term" value="C:plasma membrane"/>
    <property type="evidence" value="ECO:0000314"/>
    <property type="project" value="UniProtKB"/>
</dbReference>
<dbReference type="GO" id="GO:0004252">
    <property type="term" value="F:serine-type endopeptidase activity"/>
    <property type="evidence" value="ECO:0007669"/>
    <property type="project" value="InterPro"/>
</dbReference>
<dbReference type="GO" id="GO:0008236">
    <property type="term" value="F:serine-type peptidase activity"/>
    <property type="evidence" value="ECO:0000314"/>
    <property type="project" value="UniProtKB"/>
</dbReference>
<dbReference type="GO" id="GO:0006508">
    <property type="term" value="P:proteolysis"/>
    <property type="evidence" value="ECO:0000314"/>
    <property type="project" value="UniProtKB"/>
</dbReference>
<dbReference type="CDD" id="cd00041">
    <property type="entry name" value="CUB"/>
    <property type="match status" value="1"/>
</dbReference>
<dbReference type="CDD" id="cd00112">
    <property type="entry name" value="LDLa"/>
    <property type="match status" value="2"/>
</dbReference>
<dbReference type="CDD" id="cd00190">
    <property type="entry name" value="Tryp_SPc"/>
    <property type="match status" value="1"/>
</dbReference>
<dbReference type="FunFam" id="2.60.120.290:FF:000033">
    <property type="entry name" value="Transmembrane protease serine 7"/>
    <property type="match status" value="1"/>
</dbReference>
<dbReference type="FunFam" id="4.10.400.10:FF:000065">
    <property type="entry name" value="Transmembrane protease serine 7"/>
    <property type="match status" value="1"/>
</dbReference>
<dbReference type="FunFam" id="3.30.70.960:FF:000005">
    <property type="entry name" value="transmembrane protease serine 7"/>
    <property type="match status" value="1"/>
</dbReference>
<dbReference type="FunFam" id="2.40.10.10:FF:000003">
    <property type="entry name" value="Transmembrane serine protease 3"/>
    <property type="match status" value="1"/>
</dbReference>
<dbReference type="FunFam" id="2.60.120.290:FF:000040">
    <property type="entry name" value="Transmembrane serine protease 7"/>
    <property type="match status" value="1"/>
</dbReference>
<dbReference type="FunFam" id="4.10.400.10:FF:000109">
    <property type="entry name" value="Transmembrane serine protease 7"/>
    <property type="match status" value="1"/>
</dbReference>
<dbReference type="Gene3D" id="4.10.400.10">
    <property type="entry name" value="Low-density Lipoprotein Receptor"/>
    <property type="match status" value="3"/>
</dbReference>
<dbReference type="Gene3D" id="3.30.70.960">
    <property type="entry name" value="SEA domain"/>
    <property type="match status" value="1"/>
</dbReference>
<dbReference type="Gene3D" id="2.60.120.290">
    <property type="entry name" value="Spermadhesin, CUB domain"/>
    <property type="match status" value="2"/>
</dbReference>
<dbReference type="Gene3D" id="2.40.10.10">
    <property type="entry name" value="Trypsin-like serine proteases"/>
    <property type="match status" value="2"/>
</dbReference>
<dbReference type="InterPro" id="IPR000859">
    <property type="entry name" value="CUB_dom"/>
</dbReference>
<dbReference type="InterPro" id="IPR036055">
    <property type="entry name" value="LDL_receptor-like_sf"/>
</dbReference>
<dbReference type="InterPro" id="IPR023415">
    <property type="entry name" value="LDLR_class-A_CS"/>
</dbReference>
<dbReference type="InterPro" id="IPR002172">
    <property type="entry name" value="LDrepeatLR_classA_rpt"/>
</dbReference>
<dbReference type="InterPro" id="IPR009003">
    <property type="entry name" value="Peptidase_S1_PA"/>
</dbReference>
<dbReference type="InterPro" id="IPR043504">
    <property type="entry name" value="Peptidase_S1_PA_chymotrypsin"/>
</dbReference>
<dbReference type="InterPro" id="IPR001314">
    <property type="entry name" value="Peptidase_S1A"/>
</dbReference>
<dbReference type="InterPro" id="IPR000082">
    <property type="entry name" value="SEA_dom"/>
</dbReference>
<dbReference type="InterPro" id="IPR036364">
    <property type="entry name" value="SEA_dom_sf"/>
</dbReference>
<dbReference type="InterPro" id="IPR035914">
    <property type="entry name" value="Sperma_CUB_dom_sf"/>
</dbReference>
<dbReference type="InterPro" id="IPR001254">
    <property type="entry name" value="Trypsin_dom"/>
</dbReference>
<dbReference type="InterPro" id="IPR018114">
    <property type="entry name" value="TRYPSIN_HIS"/>
</dbReference>
<dbReference type="InterPro" id="IPR033116">
    <property type="entry name" value="TRYPSIN_SER"/>
</dbReference>
<dbReference type="PANTHER" id="PTHR24252">
    <property type="entry name" value="ACROSIN-RELATED"/>
    <property type="match status" value="1"/>
</dbReference>
<dbReference type="PANTHER" id="PTHR24252:SF12">
    <property type="entry name" value="TRANSMEMBRANE SERINE PROTEASE 7"/>
    <property type="match status" value="1"/>
</dbReference>
<dbReference type="Pfam" id="PF00431">
    <property type="entry name" value="CUB"/>
    <property type="match status" value="1"/>
</dbReference>
<dbReference type="Pfam" id="PF00057">
    <property type="entry name" value="Ldl_recept_a"/>
    <property type="match status" value="2"/>
</dbReference>
<dbReference type="Pfam" id="PF01390">
    <property type="entry name" value="SEA"/>
    <property type="match status" value="1"/>
</dbReference>
<dbReference type="Pfam" id="PF00089">
    <property type="entry name" value="Trypsin"/>
    <property type="match status" value="1"/>
</dbReference>
<dbReference type="PRINTS" id="PR00722">
    <property type="entry name" value="CHYMOTRYPSIN"/>
</dbReference>
<dbReference type="SMART" id="SM00042">
    <property type="entry name" value="CUB"/>
    <property type="match status" value="1"/>
</dbReference>
<dbReference type="SMART" id="SM00192">
    <property type="entry name" value="LDLa"/>
    <property type="match status" value="3"/>
</dbReference>
<dbReference type="SMART" id="SM00020">
    <property type="entry name" value="Tryp_SPc"/>
    <property type="match status" value="1"/>
</dbReference>
<dbReference type="SUPFAM" id="SSF57424">
    <property type="entry name" value="LDL receptor-like module"/>
    <property type="match status" value="3"/>
</dbReference>
<dbReference type="SUPFAM" id="SSF82671">
    <property type="entry name" value="SEA domain"/>
    <property type="match status" value="1"/>
</dbReference>
<dbReference type="SUPFAM" id="SSF49854">
    <property type="entry name" value="Spermadhesin, CUB domain"/>
    <property type="match status" value="2"/>
</dbReference>
<dbReference type="SUPFAM" id="SSF50494">
    <property type="entry name" value="Trypsin-like serine proteases"/>
    <property type="match status" value="1"/>
</dbReference>
<dbReference type="PROSITE" id="PS01180">
    <property type="entry name" value="CUB"/>
    <property type="match status" value="2"/>
</dbReference>
<dbReference type="PROSITE" id="PS01209">
    <property type="entry name" value="LDLRA_1"/>
    <property type="match status" value="1"/>
</dbReference>
<dbReference type="PROSITE" id="PS50068">
    <property type="entry name" value="LDLRA_2"/>
    <property type="match status" value="2"/>
</dbReference>
<dbReference type="PROSITE" id="PS50024">
    <property type="entry name" value="SEA"/>
    <property type="match status" value="1"/>
</dbReference>
<dbReference type="PROSITE" id="PS50240">
    <property type="entry name" value="TRYPSIN_DOM"/>
    <property type="match status" value="1"/>
</dbReference>
<dbReference type="PROSITE" id="PS00134">
    <property type="entry name" value="TRYPSIN_HIS"/>
    <property type="match status" value="1"/>
</dbReference>
<dbReference type="PROSITE" id="PS00135">
    <property type="entry name" value="TRYPSIN_SER"/>
    <property type="match status" value="1"/>
</dbReference>
<feature type="chain" id="PRO_0000027860" description="Transmembrane protease serine 7">
    <location>
        <begin position="1"/>
        <end position="829"/>
    </location>
</feature>
<feature type="topological domain" description="Cytoplasmic" evidence="2">
    <location>
        <begin position="1"/>
        <end position="62"/>
    </location>
</feature>
<feature type="transmembrane region" description="Helical; Signal-anchor for type II membrane protein" evidence="2">
    <location>
        <begin position="63"/>
        <end position="83"/>
    </location>
</feature>
<feature type="topological domain" description="Extracellular" evidence="2">
    <location>
        <begin position="84"/>
        <end position="829"/>
    </location>
</feature>
<feature type="domain" description="SEA" evidence="5">
    <location>
        <begin position="92"/>
        <end position="220"/>
    </location>
</feature>
<feature type="domain" description="CUB 1" evidence="3">
    <location>
        <begin position="233"/>
        <end position="346"/>
    </location>
</feature>
<feature type="domain" description="CUB 2" evidence="3">
    <location>
        <begin position="351"/>
        <end position="467"/>
    </location>
</feature>
<feature type="domain" description="LDL-receptor class A 1" evidence="4">
    <location>
        <begin position="469"/>
        <end position="505"/>
    </location>
</feature>
<feature type="domain" description="LDL-receptor class A 2" evidence="4">
    <location>
        <begin position="503"/>
        <end position="540"/>
    </location>
</feature>
<feature type="domain" description="LDL-receptor class A 3" evidence="4">
    <location>
        <begin position="544"/>
        <end position="581"/>
    </location>
</feature>
<feature type="domain" description="Peptidase S1" evidence="6">
    <location>
        <begin position="592"/>
        <end position="826"/>
    </location>
</feature>
<feature type="region of interest" description="Disordered" evidence="7">
    <location>
        <begin position="26"/>
        <end position="52"/>
    </location>
</feature>
<feature type="compositionally biased region" description="Basic residues" evidence="7">
    <location>
        <begin position="32"/>
        <end position="52"/>
    </location>
</feature>
<feature type="active site" description="Charge relay system" evidence="1">
    <location>
        <position position="632"/>
    </location>
</feature>
<feature type="active site" description="Charge relay system" evidence="1">
    <location>
        <position position="680"/>
    </location>
</feature>
<feature type="active site" description="Charge relay system" evidence="1">
    <location>
        <position position="776"/>
    </location>
</feature>
<feature type="site" description="Cleavage" evidence="2">
    <location>
        <begin position="255"/>
        <end position="256"/>
    </location>
</feature>
<feature type="glycosylation site" description="N-linked (GlcNAc...) asparagine" evidence="2">
    <location>
        <position position="401"/>
    </location>
</feature>
<feature type="glycosylation site" description="N-linked (GlcNAc...) asparagine" evidence="2">
    <location>
        <position position="465"/>
    </location>
</feature>
<feature type="disulfide bond" evidence="1">
    <location>
        <begin position="233"/>
        <end position="259"/>
    </location>
</feature>
<feature type="disulfide bond" evidence="1">
    <location>
        <begin position="285"/>
        <end position="308"/>
    </location>
</feature>
<feature type="disulfide bond" evidence="1">
    <location>
        <begin position="351"/>
        <end position="382"/>
    </location>
</feature>
<feature type="disulfide bond" evidence="1">
    <location>
        <begin position="470"/>
        <end position="482"/>
    </location>
</feature>
<feature type="disulfide bond" evidence="1">
    <location>
        <begin position="477"/>
        <end position="495"/>
    </location>
</feature>
<feature type="disulfide bond" evidence="1">
    <location>
        <begin position="489"/>
        <end position="504"/>
    </location>
</feature>
<feature type="disulfide bond" evidence="1">
    <location>
        <begin position="511"/>
        <end position="530"/>
    </location>
</feature>
<feature type="disulfide bond" evidence="1">
    <location>
        <begin position="524"/>
        <end position="539"/>
    </location>
</feature>
<feature type="disulfide bond" evidence="1">
    <location>
        <begin position="545"/>
        <end position="557"/>
    </location>
</feature>
<feature type="disulfide bond" evidence="1">
    <location>
        <begin position="552"/>
        <end position="571"/>
    </location>
</feature>
<feature type="disulfide bond" evidence="1">
    <location>
        <begin position="565"/>
        <end position="580"/>
    </location>
</feature>
<feature type="disulfide bond" evidence="1">
    <location>
        <begin position="617"/>
        <end position="633"/>
    </location>
</feature>
<feature type="disulfide bond" evidence="1">
    <location>
        <begin position="716"/>
        <end position="782"/>
    </location>
</feature>
<feature type="disulfide bond" evidence="1">
    <location>
        <begin position="748"/>
        <end position="761"/>
    </location>
</feature>
<feature type="disulfide bond" evidence="1">
    <location>
        <begin position="772"/>
        <end position="802"/>
    </location>
</feature>
<feature type="sequence conflict" description="In Ref. 1; AAY66996." evidence="9" ref="1">
    <original>G</original>
    <variation>S</variation>
    <location>
        <position position="232"/>
    </location>
</feature>
<feature type="sequence conflict" description="In Ref. 1; AAY66996." evidence="9" ref="1">
    <original>I</original>
    <variation>T</variation>
    <location>
        <position position="327"/>
    </location>
</feature>
<feature type="sequence conflict" description="In Ref. 3; BAC32448." evidence="9" ref="3">
    <original>P</original>
    <variation>Q</variation>
    <location>
        <position position="469"/>
    </location>
</feature>
<feature type="sequence conflict" description="In Ref. 1; AAY66996." evidence="9" ref="1">
    <original>V</original>
    <variation>I</variation>
    <location>
        <position position="483"/>
    </location>
</feature>
<feature type="sequence conflict" description="In Ref. 1; AAY66996." evidence="9" ref="1">
    <original>S</original>
    <variation>I</variation>
    <location>
        <position position="515"/>
    </location>
</feature>
<evidence type="ECO:0000250" key="1"/>
<evidence type="ECO:0000255" key="2"/>
<evidence type="ECO:0000255" key="3">
    <source>
        <dbReference type="PROSITE-ProRule" id="PRU00059"/>
    </source>
</evidence>
<evidence type="ECO:0000255" key="4">
    <source>
        <dbReference type="PROSITE-ProRule" id="PRU00124"/>
    </source>
</evidence>
<evidence type="ECO:0000255" key="5">
    <source>
        <dbReference type="PROSITE-ProRule" id="PRU00188"/>
    </source>
</evidence>
<evidence type="ECO:0000255" key="6">
    <source>
        <dbReference type="PROSITE-ProRule" id="PRU00274"/>
    </source>
</evidence>
<evidence type="ECO:0000256" key="7">
    <source>
        <dbReference type="SAM" id="MobiDB-lite"/>
    </source>
</evidence>
<evidence type="ECO:0000269" key="8">
    <source>
    </source>
</evidence>
<evidence type="ECO:0000305" key="9"/>
<gene>
    <name type="primary">Tmprss7</name>
</gene>
<reference key="1">
    <citation type="journal article" date="2005" name="Biochem. J.">
        <title>Matriptase-3 is a novel phylogenetically preserved membrane-anchored serine protease with broad serpin reactivity.</title>
        <authorList>
            <person name="Szabo R."/>
            <person name="Netzel-Arnett S."/>
            <person name="Hobson J.P."/>
            <person name="Antalis T.M."/>
            <person name="Bugge T.H."/>
        </authorList>
    </citation>
    <scope>NUCLEOTIDE SEQUENCE [MRNA]</scope>
    <scope>FUNCTION</scope>
    <scope>BIOPHYSICOCHEMICAL PROPERTIES</scope>
    <scope>SUBCELLULAR LOCATION</scope>
    <scope>TISSUE SPECIFICITY</scope>
    <scope>GLYCOSYLATION</scope>
    <source>
        <strain>C57BL/6 x NIH Black Swiss</strain>
    </source>
</reference>
<reference key="2">
    <citation type="journal article" date="2009" name="PLoS Biol.">
        <title>Lineage-specific biology revealed by a finished genome assembly of the mouse.</title>
        <authorList>
            <person name="Church D.M."/>
            <person name="Goodstadt L."/>
            <person name="Hillier L.W."/>
            <person name="Zody M.C."/>
            <person name="Goldstein S."/>
            <person name="She X."/>
            <person name="Bult C.J."/>
            <person name="Agarwala R."/>
            <person name="Cherry J.L."/>
            <person name="DiCuccio M."/>
            <person name="Hlavina W."/>
            <person name="Kapustin Y."/>
            <person name="Meric P."/>
            <person name="Maglott D."/>
            <person name="Birtle Z."/>
            <person name="Marques A.C."/>
            <person name="Graves T."/>
            <person name="Zhou S."/>
            <person name="Teague B."/>
            <person name="Potamousis K."/>
            <person name="Churas C."/>
            <person name="Place M."/>
            <person name="Herschleb J."/>
            <person name="Runnheim R."/>
            <person name="Forrest D."/>
            <person name="Amos-Landgraf J."/>
            <person name="Schwartz D.C."/>
            <person name="Cheng Z."/>
            <person name="Lindblad-Toh K."/>
            <person name="Eichler E.E."/>
            <person name="Ponting C.P."/>
        </authorList>
    </citation>
    <scope>NUCLEOTIDE SEQUENCE [LARGE SCALE GENOMIC DNA]</scope>
    <source>
        <strain>C57BL/6J</strain>
    </source>
</reference>
<reference key="3">
    <citation type="journal article" date="2005" name="Science">
        <title>The transcriptional landscape of the mammalian genome.</title>
        <authorList>
            <person name="Carninci P."/>
            <person name="Kasukawa T."/>
            <person name="Katayama S."/>
            <person name="Gough J."/>
            <person name="Frith M.C."/>
            <person name="Maeda N."/>
            <person name="Oyama R."/>
            <person name="Ravasi T."/>
            <person name="Lenhard B."/>
            <person name="Wells C."/>
            <person name="Kodzius R."/>
            <person name="Shimokawa K."/>
            <person name="Bajic V.B."/>
            <person name="Brenner S.E."/>
            <person name="Batalov S."/>
            <person name="Forrest A.R."/>
            <person name="Zavolan M."/>
            <person name="Davis M.J."/>
            <person name="Wilming L.G."/>
            <person name="Aidinis V."/>
            <person name="Allen J.E."/>
            <person name="Ambesi-Impiombato A."/>
            <person name="Apweiler R."/>
            <person name="Aturaliya R.N."/>
            <person name="Bailey T.L."/>
            <person name="Bansal M."/>
            <person name="Baxter L."/>
            <person name="Beisel K.W."/>
            <person name="Bersano T."/>
            <person name="Bono H."/>
            <person name="Chalk A.M."/>
            <person name="Chiu K.P."/>
            <person name="Choudhary V."/>
            <person name="Christoffels A."/>
            <person name="Clutterbuck D.R."/>
            <person name="Crowe M.L."/>
            <person name="Dalla E."/>
            <person name="Dalrymple B.P."/>
            <person name="de Bono B."/>
            <person name="Della Gatta G."/>
            <person name="di Bernardo D."/>
            <person name="Down T."/>
            <person name="Engstrom P."/>
            <person name="Fagiolini M."/>
            <person name="Faulkner G."/>
            <person name="Fletcher C.F."/>
            <person name="Fukushima T."/>
            <person name="Furuno M."/>
            <person name="Futaki S."/>
            <person name="Gariboldi M."/>
            <person name="Georgii-Hemming P."/>
            <person name="Gingeras T.R."/>
            <person name="Gojobori T."/>
            <person name="Green R.E."/>
            <person name="Gustincich S."/>
            <person name="Harbers M."/>
            <person name="Hayashi Y."/>
            <person name="Hensch T.K."/>
            <person name="Hirokawa N."/>
            <person name="Hill D."/>
            <person name="Huminiecki L."/>
            <person name="Iacono M."/>
            <person name="Ikeo K."/>
            <person name="Iwama A."/>
            <person name="Ishikawa T."/>
            <person name="Jakt M."/>
            <person name="Kanapin A."/>
            <person name="Katoh M."/>
            <person name="Kawasawa Y."/>
            <person name="Kelso J."/>
            <person name="Kitamura H."/>
            <person name="Kitano H."/>
            <person name="Kollias G."/>
            <person name="Krishnan S.P."/>
            <person name="Kruger A."/>
            <person name="Kummerfeld S.K."/>
            <person name="Kurochkin I.V."/>
            <person name="Lareau L.F."/>
            <person name="Lazarevic D."/>
            <person name="Lipovich L."/>
            <person name="Liu J."/>
            <person name="Liuni S."/>
            <person name="McWilliam S."/>
            <person name="Madan Babu M."/>
            <person name="Madera M."/>
            <person name="Marchionni L."/>
            <person name="Matsuda H."/>
            <person name="Matsuzawa S."/>
            <person name="Miki H."/>
            <person name="Mignone F."/>
            <person name="Miyake S."/>
            <person name="Morris K."/>
            <person name="Mottagui-Tabar S."/>
            <person name="Mulder N."/>
            <person name="Nakano N."/>
            <person name="Nakauchi H."/>
            <person name="Ng P."/>
            <person name="Nilsson R."/>
            <person name="Nishiguchi S."/>
            <person name="Nishikawa S."/>
            <person name="Nori F."/>
            <person name="Ohara O."/>
            <person name="Okazaki Y."/>
            <person name="Orlando V."/>
            <person name="Pang K.C."/>
            <person name="Pavan W.J."/>
            <person name="Pavesi G."/>
            <person name="Pesole G."/>
            <person name="Petrovsky N."/>
            <person name="Piazza S."/>
            <person name="Reed J."/>
            <person name="Reid J.F."/>
            <person name="Ring B.Z."/>
            <person name="Ringwald M."/>
            <person name="Rost B."/>
            <person name="Ruan Y."/>
            <person name="Salzberg S.L."/>
            <person name="Sandelin A."/>
            <person name="Schneider C."/>
            <person name="Schoenbach C."/>
            <person name="Sekiguchi K."/>
            <person name="Semple C.A."/>
            <person name="Seno S."/>
            <person name="Sessa L."/>
            <person name="Sheng Y."/>
            <person name="Shibata Y."/>
            <person name="Shimada H."/>
            <person name="Shimada K."/>
            <person name="Silva D."/>
            <person name="Sinclair B."/>
            <person name="Sperling S."/>
            <person name="Stupka E."/>
            <person name="Sugiura K."/>
            <person name="Sultana R."/>
            <person name="Takenaka Y."/>
            <person name="Taki K."/>
            <person name="Tammoja K."/>
            <person name="Tan S.L."/>
            <person name="Tang S."/>
            <person name="Taylor M.S."/>
            <person name="Tegner J."/>
            <person name="Teichmann S.A."/>
            <person name="Ueda H.R."/>
            <person name="van Nimwegen E."/>
            <person name="Verardo R."/>
            <person name="Wei C.L."/>
            <person name="Yagi K."/>
            <person name="Yamanishi H."/>
            <person name="Zabarovsky E."/>
            <person name="Zhu S."/>
            <person name="Zimmer A."/>
            <person name="Hide W."/>
            <person name="Bult C."/>
            <person name="Grimmond S.M."/>
            <person name="Teasdale R.D."/>
            <person name="Liu E.T."/>
            <person name="Brusic V."/>
            <person name="Quackenbush J."/>
            <person name="Wahlestedt C."/>
            <person name="Mattick J.S."/>
            <person name="Hume D.A."/>
            <person name="Kai C."/>
            <person name="Sasaki D."/>
            <person name="Tomaru Y."/>
            <person name="Fukuda S."/>
            <person name="Kanamori-Katayama M."/>
            <person name="Suzuki M."/>
            <person name="Aoki J."/>
            <person name="Arakawa T."/>
            <person name="Iida J."/>
            <person name="Imamura K."/>
            <person name="Itoh M."/>
            <person name="Kato T."/>
            <person name="Kawaji H."/>
            <person name="Kawagashira N."/>
            <person name="Kawashima T."/>
            <person name="Kojima M."/>
            <person name="Kondo S."/>
            <person name="Konno H."/>
            <person name="Nakano K."/>
            <person name="Ninomiya N."/>
            <person name="Nishio T."/>
            <person name="Okada M."/>
            <person name="Plessy C."/>
            <person name="Shibata K."/>
            <person name="Shiraki T."/>
            <person name="Suzuki S."/>
            <person name="Tagami M."/>
            <person name="Waki K."/>
            <person name="Watahiki A."/>
            <person name="Okamura-Oho Y."/>
            <person name="Suzuki H."/>
            <person name="Kawai J."/>
            <person name="Hayashizaki Y."/>
        </authorList>
    </citation>
    <scope>NUCLEOTIDE SEQUENCE [LARGE SCALE MRNA] OF 127-829</scope>
    <source>
        <strain>C57BL/6J</strain>
        <tissue>Corpora quadrigemina</tissue>
    </source>
</reference>
<comment type="function">
    <text evidence="8">Serine protease which preferentially hydrolyzes peptides with Arg at the P1 position.</text>
</comment>
<comment type="biophysicochemical properties">
    <kinetics>
        <KM evidence="8">240 nM for Suc-Ala-Ala-Pro-Arg-pNA</KM>
        <KM evidence="8">534 nM for Suc-Ala-Ala-Pro-Lys-pNA</KM>
    </kinetics>
</comment>
<comment type="subunit">
    <text evidence="1">Forms a heterodimer with SERPINA5.</text>
</comment>
<comment type="subcellular location">
    <subcellularLocation>
        <location evidence="8">Cell membrane</location>
        <topology evidence="8">Single-pass type II membrane protein</topology>
    </subcellularLocation>
</comment>
<comment type="tissue specificity">
    <text evidence="8">Expressed in brain, eye, testis, skin, epididymis and salivary gland with lower levels in heart, skeletal muscle, thymus, ovary, prostate and uterus.</text>
</comment>
<comment type="PTM">
    <text evidence="8">N-glycosylated.</text>
</comment>
<comment type="similarity">
    <text evidence="6">Belongs to the peptidase S1 family.</text>
</comment>
<comment type="sequence caution" evidence="9">
    <conflict type="frameshift">
        <sequence resource="EMBL-CDS" id="BAC32448"/>
    </conflict>
</comment>
<comment type="sequence caution" evidence="9">
    <conflict type="miscellaneous discrepancy">
        <sequence resource="EMBL-CDS" id="BAC32448"/>
    </conflict>
    <text>Differs at the N-terminus for unknown reasons.</text>
</comment>
<accession>Q8BIK6</accession>
<accession>E9QME7</accession>
<accession>Q4PPC3</accession>
<protein>
    <recommendedName>
        <fullName>Transmembrane protease serine 7</fullName>
        <ecNumber>3.4.21.-</ecNumber>
    </recommendedName>
    <alternativeName>
        <fullName>Matriptase-3</fullName>
    </alternativeName>
</protein>
<proteinExistence type="evidence at protein level"/>
<sequence>MDKEKSDPSCKSSDLKISNISIQVVSVPGKLPGRRPPRKPIGKPRPRKQPKKRAPFWNVQNKIILFTVFLFILAVTAWTLLWLYISKTESKDAFYFVGMFRITNIEFLPEYRQKESREFLSMAKTVQQVVNLVYTTSAFSKFYKQSVVADVSSNNKGGLLVHFWIVFVMPHAKGHIFCEECVAAILKDSIQTSIINRTSVGSLQGLAVDMDSVVLNAGLRSDYSSAVGSDNGCSRYLYADHLTLRYPLEISATSGQLMCHFKLVAIVGYLIRLSIESIQLEADNCITDSLTVYDSLLPIRSAILYRICEPTRTLMSFVSTNNLMLVILKSPYVRRLAGIRAYFEVIPEQKCESTILVKEINSFEGKISSPYYPSYYPPKCKCTWTFQTSLSTLGIALKFYNYSITKKSAKGCEHGWWEINEHMYCGSYMDHETIFRVPSPLVHIQLQCSSRLSDKPLLVEYGGYNISQPCPAGSFRCSSGLCVPQAQRCDGVNDCFDESDELFCVTVKPACNSSSFRQHGPLVCDGFRDCEDGQDEQNCTRSIPCTSRTFKCGNDICFRKQNAQCDGIVDCPDGSDEEGCGCSRSSSFLHRIVGGSDSQEGTWPWQVSLHFVGSAYCGASVISREWLLSAAHCFHGNRLSDPTPWTAHLGMYVQGNAKFISPVRRIVVHEYYNSQTFDYDIALLQLSIAWPETLKQLIQPICIPPAGQKVRSGEKCWVTGWGRRHEADSKGSPVLQQAEVELIDQTVCVSTYGIITSRMLCAGVMSGKSDACKGDSGGPLSCRRKSDGKWILTGIVSWGHGCGRPNFPGVYTRVSSFVPWIHKYVPSLL</sequence>